<keyword id="KW-0143">Chaperone</keyword>
<keyword id="KW-0963">Cytoplasm</keyword>
<keyword id="KW-0653">Protein transport</keyword>
<keyword id="KW-0811">Translocation</keyword>
<keyword id="KW-0813">Transport</keyword>
<comment type="function">
    <text evidence="1">One of the proteins required for the normal export of preproteins out of the cell cytoplasm. It is a molecular chaperone that binds to a subset of precursor proteins, maintaining them in a translocation-competent state. It also specifically binds to its receptor SecA.</text>
</comment>
<comment type="subunit">
    <text evidence="1">Homotetramer, a dimer of dimers. One homotetramer interacts with 1 SecA dimer.</text>
</comment>
<comment type="subcellular location">
    <subcellularLocation>
        <location evidence="1">Cytoplasm</location>
    </subcellularLocation>
</comment>
<comment type="similarity">
    <text evidence="1">Belongs to the SecB family.</text>
</comment>
<accession>Q5X2Y1</accession>
<organism>
    <name type="scientific">Legionella pneumophila (strain Paris)</name>
    <dbReference type="NCBI Taxonomy" id="297246"/>
    <lineage>
        <taxon>Bacteria</taxon>
        <taxon>Pseudomonadati</taxon>
        <taxon>Pseudomonadota</taxon>
        <taxon>Gammaproteobacteria</taxon>
        <taxon>Legionellales</taxon>
        <taxon>Legionellaceae</taxon>
        <taxon>Legionella</taxon>
    </lineage>
</organism>
<sequence>MTEQLNTNQQNDEAQFMIQRIYIKDLSYETPNTPAVFQQQWEPELKLDLNTTTTQLDKNVYEVVLTVTTTVMNQKTTAFLVEVKQAGIFTIQGAAASQLDHLLHSFCPSILFPYAREAITSQVIRGSFPQLVLAPINFDALYMQQLEEKQKATGAKDETVSH</sequence>
<feature type="chain" id="PRO_0000055382" description="Protein-export protein SecB">
    <location>
        <begin position="1"/>
        <end position="162"/>
    </location>
</feature>
<gene>
    <name evidence="1" type="primary">secB</name>
    <name type="ordered locus">lpp2256</name>
</gene>
<protein>
    <recommendedName>
        <fullName evidence="1">Protein-export protein SecB</fullName>
    </recommendedName>
</protein>
<evidence type="ECO:0000255" key="1">
    <source>
        <dbReference type="HAMAP-Rule" id="MF_00821"/>
    </source>
</evidence>
<dbReference type="EMBL" id="CR628336">
    <property type="protein sequence ID" value="CAH13409.1"/>
    <property type="molecule type" value="Genomic_DNA"/>
</dbReference>
<dbReference type="RefSeq" id="WP_011216200.1">
    <property type="nucleotide sequence ID" value="NC_006368.1"/>
</dbReference>
<dbReference type="SMR" id="Q5X2Y1"/>
<dbReference type="KEGG" id="lpp:lpp2256"/>
<dbReference type="LegioList" id="lpp2256"/>
<dbReference type="HOGENOM" id="CLU_111574_1_0_6"/>
<dbReference type="GO" id="GO:0005737">
    <property type="term" value="C:cytoplasm"/>
    <property type="evidence" value="ECO:0007669"/>
    <property type="project" value="UniProtKB-SubCell"/>
</dbReference>
<dbReference type="GO" id="GO:0051082">
    <property type="term" value="F:unfolded protein binding"/>
    <property type="evidence" value="ECO:0007669"/>
    <property type="project" value="InterPro"/>
</dbReference>
<dbReference type="GO" id="GO:0006457">
    <property type="term" value="P:protein folding"/>
    <property type="evidence" value="ECO:0007669"/>
    <property type="project" value="UniProtKB-UniRule"/>
</dbReference>
<dbReference type="GO" id="GO:0051262">
    <property type="term" value="P:protein tetramerization"/>
    <property type="evidence" value="ECO:0007669"/>
    <property type="project" value="InterPro"/>
</dbReference>
<dbReference type="GO" id="GO:0015031">
    <property type="term" value="P:protein transport"/>
    <property type="evidence" value="ECO:0007669"/>
    <property type="project" value="UniProtKB-UniRule"/>
</dbReference>
<dbReference type="Gene3D" id="3.10.420.10">
    <property type="entry name" value="SecB-like"/>
    <property type="match status" value="1"/>
</dbReference>
<dbReference type="HAMAP" id="MF_00821">
    <property type="entry name" value="SecB"/>
    <property type="match status" value="1"/>
</dbReference>
<dbReference type="InterPro" id="IPR003708">
    <property type="entry name" value="SecB"/>
</dbReference>
<dbReference type="InterPro" id="IPR035958">
    <property type="entry name" value="SecB-like_sf"/>
</dbReference>
<dbReference type="NCBIfam" id="NF004393">
    <property type="entry name" value="PRK05751.1-4"/>
    <property type="match status" value="1"/>
</dbReference>
<dbReference type="NCBIfam" id="TIGR00809">
    <property type="entry name" value="secB"/>
    <property type="match status" value="1"/>
</dbReference>
<dbReference type="PANTHER" id="PTHR36918">
    <property type="match status" value="1"/>
</dbReference>
<dbReference type="PANTHER" id="PTHR36918:SF1">
    <property type="entry name" value="PROTEIN-EXPORT PROTEIN SECB"/>
    <property type="match status" value="1"/>
</dbReference>
<dbReference type="Pfam" id="PF02556">
    <property type="entry name" value="SecB"/>
    <property type="match status" value="1"/>
</dbReference>
<dbReference type="PRINTS" id="PR01594">
    <property type="entry name" value="SECBCHAPRONE"/>
</dbReference>
<dbReference type="SUPFAM" id="SSF54611">
    <property type="entry name" value="SecB-like"/>
    <property type="match status" value="1"/>
</dbReference>
<name>SECB_LEGPA</name>
<reference key="1">
    <citation type="journal article" date="2004" name="Nat. Genet.">
        <title>Evidence in the Legionella pneumophila genome for exploitation of host cell functions and high genome plasticity.</title>
        <authorList>
            <person name="Cazalet C."/>
            <person name="Rusniok C."/>
            <person name="Brueggemann H."/>
            <person name="Zidane N."/>
            <person name="Magnier A."/>
            <person name="Ma L."/>
            <person name="Tichit M."/>
            <person name="Jarraud S."/>
            <person name="Bouchier C."/>
            <person name="Vandenesch F."/>
            <person name="Kunst F."/>
            <person name="Etienne J."/>
            <person name="Glaser P."/>
            <person name="Buchrieser C."/>
        </authorList>
    </citation>
    <scope>NUCLEOTIDE SEQUENCE [LARGE SCALE GENOMIC DNA]</scope>
    <source>
        <strain>Paris</strain>
    </source>
</reference>
<proteinExistence type="inferred from homology"/>